<accession>C0P381</accession>
<accession>A0A166VB38</accession>
<proteinExistence type="evidence at protein level"/>
<protein>
    <recommendedName>
        <fullName evidence="4">50 kDa gamma-zein</fullName>
    </recommendedName>
</protein>
<feature type="signal peptide" evidence="1">
    <location>
        <begin position="1"/>
        <end position="19"/>
    </location>
</feature>
<feature type="chain" id="PRO_5007646413" description="50 kDa gamma-zein" evidence="1">
    <location>
        <begin position="20"/>
        <end position="286"/>
    </location>
</feature>
<feature type="propeptide" id="PRO_0000438211" description="Removed in mature form" evidence="1">
    <location>
        <begin position="287"/>
        <end position="308"/>
    </location>
</feature>
<feature type="region of interest" description="Disordered" evidence="2">
    <location>
        <begin position="27"/>
        <end position="159"/>
    </location>
</feature>
<feature type="compositionally biased region" description="Low complexity" evidence="2">
    <location>
        <begin position="55"/>
        <end position="119"/>
    </location>
</feature>
<feature type="compositionally biased region" description="Basic and acidic residues" evidence="2">
    <location>
        <begin position="120"/>
        <end position="129"/>
    </location>
</feature>
<feature type="compositionally biased region" description="Low complexity" evidence="2">
    <location>
        <begin position="130"/>
        <end position="159"/>
    </location>
</feature>
<feature type="lipid moiety-binding region" description="GPI-anchor amidated cysteine" evidence="1">
    <location>
        <position position="286"/>
    </location>
</feature>
<feature type="sequence conflict" description="In Ref. 3; ANA76493/ANA76499." evidence="4" ref="3">
    <location>
        <position position="91"/>
    </location>
</feature>
<evidence type="ECO:0000255" key="1"/>
<evidence type="ECO:0000256" key="2">
    <source>
        <dbReference type="SAM" id="MobiDB-lite"/>
    </source>
</evidence>
<evidence type="ECO:0000269" key="3">
    <source>
    </source>
</evidence>
<evidence type="ECO:0000305" key="4"/>
<evidence type="ECO:0000305" key="5">
    <source>
    </source>
</evidence>
<evidence type="ECO:0000312" key="6">
    <source>
        <dbReference type="EMBL" id="ANA76493.1"/>
    </source>
</evidence>
<keyword id="KW-1003">Cell membrane</keyword>
<keyword id="KW-0325">Glycoprotein</keyword>
<keyword id="KW-0336">GPI-anchor</keyword>
<keyword id="KW-0449">Lipoprotein</keyword>
<keyword id="KW-0472">Membrane</keyword>
<keyword id="KW-1185">Reference proteome</keyword>
<keyword id="KW-0708">Seed storage protein</keyword>
<keyword id="KW-0732">Signal</keyword>
<keyword id="KW-0758">Storage protein</keyword>
<reference key="1">
    <citation type="journal article" date="2009" name="PLoS Genet.">
        <title>Sequencing, mapping, and analysis of 27,455 maize full-length cDNAs.</title>
        <authorList>
            <person name="Soderlund C."/>
            <person name="Descour A."/>
            <person name="Kudrna D."/>
            <person name="Bomhoff M."/>
            <person name="Boyd L."/>
            <person name="Currie J."/>
            <person name="Angelova A."/>
            <person name="Collura K."/>
            <person name="Wissotski M."/>
            <person name="Ashley E."/>
            <person name="Morrow D."/>
            <person name="Fernandes J."/>
            <person name="Walbot V."/>
            <person name="Yu Y."/>
        </authorList>
    </citation>
    <scope>NUCLEOTIDE SEQUENCE [MRNA]</scope>
    <source>
        <strain>cv. B73</strain>
    </source>
</reference>
<reference key="2">
    <citation type="journal article" date="2009" name="Science">
        <title>The B73 maize genome: complexity, diversity, and dynamics.</title>
        <authorList>
            <person name="Schnable P.S."/>
            <person name="Ware D."/>
            <person name="Fulton R.S."/>
            <person name="Stein J.C."/>
            <person name="Wei F."/>
            <person name="Pasternak S."/>
            <person name="Liang C."/>
            <person name="Zhang J."/>
            <person name="Fulton L."/>
            <person name="Graves T.A."/>
            <person name="Minx P."/>
            <person name="Reily A.D."/>
            <person name="Courtney L."/>
            <person name="Kruchowski S.S."/>
            <person name="Tomlinson C."/>
            <person name="Strong C."/>
            <person name="Delehaunty K."/>
            <person name="Fronick C."/>
            <person name="Courtney B."/>
            <person name="Rock S.M."/>
            <person name="Belter E."/>
            <person name="Du F."/>
            <person name="Kim K."/>
            <person name="Abbott R.M."/>
            <person name="Cotton M."/>
            <person name="Levy A."/>
            <person name="Marchetto P."/>
            <person name="Ochoa K."/>
            <person name="Jackson S.M."/>
            <person name="Gillam B."/>
            <person name="Chen W."/>
            <person name="Yan L."/>
            <person name="Higginbotham J."/>
            <person name="Cardenas M."/>
            <person name="Waligorski J."/>
            <person name="Applebaum E."/>
            <person name="Phelps L."/>
            <person name="Falcone J."/>
            <person name="Kanchi K."/>
            <person name="Thane T."/>
            <person name="Scimone A."/>
            <person name="Thane N."/>
            <person name="Henke J."/>
            <person name="Wang T."/>
            <person name="Ruppert J."/>
            <person name="Shah N."/>
            <person name="Rotter K."/>
            <person name="Hodges J."/>
            <person name="Ingenthron E."/>
            <person name="Cordes M."/>
            <person name="Kohlberg S."/>
            <person name="Sgro J."/>
            <person name="Delgado B."/>
            <person name="Mead K."/>
            <person name="Chinwalla A."/>
            <person name="Leonard S."/>
            <person name="Crouse K."/>
            <person name="Collura K."/>
            <person name="Kudrna D."/>
            <person name="Currie J."/>
            <person name="He R."/>
            <person name="Angelova A."/>
            <person name="Rajasekar S."/>
            <person name="Mueller T."/>
            <person name="Lomeli R."/>
            <person name="Scara G."/>
            <person name="Ko A."/>
            <person name="Delaney K."/>
            <person name="Wissotski M."/>
            <person name="Lopez G."/>
            <person name="Campos D."/>
            <person name="Braidotti M."/>
            <person name="Ashley E."/>
            <person name="Golser W."/>
            <person name="Kim H."/>
            <person name="Lee S."/>
            <person name="Lin J."/>
            <person name="Dujmic Z."/>
            <person name="Kim W."/>
            <person name="Talag J."/>
            <person name="Zuccolo A."/>
            <person name="Fan C."/>
            <person name="Sebastian A."/>
            <person name="Kramer M."/>
            <person name="Spiegel L."/>
            <person name="Nascimento L."/>
            <person name="Zutavern T."/>
            <person name="Miller B."/>
            <person name="Ambroise C."/>
            <person name="Muller S."/>
            <person name="Spooner W."/>
            <person name="Narechania A."/>
            <person name="Ren L."/>
            <person name="Wei S."/>
            <person name="Kumari S."/>
            <person name="Faga B."/>
            <person name="Levy M.J."/>
            <person name="McMahan L."/>
            <person name="Van Buren P."/>
            <person name="Vaughn M.W."/>
            <person name="Ying K."/>
            <person name="Yeh C.-T."/>
            <person name="Emrich S.J."/>
            <person name="Jia Y."/>
            <person name="Kalyanaraman A."/>
            <person name="Hsia A.-P."/>
            <person name="Barbazuk W.B."/>
            <person name="Baucom R.S."/>
            <person name="Brutnell T.P."/>
            <person name="Carpita N.C."/>
            <person name="Chaparro C."/>
            <person name="Chia J.-M."/>
            <person name="Deragon J.-M."/>
            <person name="Estill J.C."/>
            <person name="Fu Y."/>
            <person name="Jeddeloh J.A."/>
            <person name="Han Y."/>
            <person name="Lee H."/>
            <person name="Li P."/>
            <person name="Lisch D.R."/>
            <person name="Liu S."/>
            <person name="Liu Z."/>
            <person name="Nagel D.H."/>
            <person name="McCann M.C."/>
            <person name="SanMiguel P."/>
            <person name="Myers A.M."/>
            <person name="Nettleton D."/>
            <person name="Nguyen J."/>
            <person name="Penning B.W."/>
            <person name="Ponnala L."/>
            <person name="Schneider K.L."/>
            <person name="Schwartz D.C."/>
            <person name="Sharma A."/>
            <person name="Soderlund C."/>
            <person name="Springer N.M."/>
            <person name="Sun Q."/>
            <person name="Wang H."/>
            <person name="Waterman M."/>
            <person name="Westerman R."/>
            <person name="Wolfgruber T.K."/>
            <person name="Yang L."/>
            <person name="Yu Y."/>
            <person name="Zhang L."/>
            <person name="Zhou S."/>
            <person name="Zhu Q."/>
            <person name="Bennetzen J.L."/>
            <person name="Dawe R.K."/>
            <person name="Jiang J."/>
            <person name="Jiang N."/>
            <person name="Presting G.G."/>
            <person name="Wessler S.R."/>
            <person name="Aluru S."/>
            <person name="Martienssen R.A."/>
            <person name="Clifton S.W."/>
            <person name="McCombie W.R."/>
            <person name="Wing R.A."/>
            <person name="Wilson R.K."/>
        </authorList>
    </citation>
    <scope>NUCLEOTIDE SEQUENCE [LARGE SCALE GENOMIC DNA]</scope>
    <source>
        <strain>cv. B73</strain>
    </source>
</reference>
<reference key="3">
    <citation type="journal article" date="2016" name="Proc. Natl. Acad. Sci. U.S.A.">
        <title>Gene duplication confers enhanced expression of 27-kDa gamma-zein for endosperm modification in quality protein maize.</title>
        <authorList>
            <person name="Liu H."/>
            <person name="Shi J."/>
            <person name="Sun C."/>
            <person name="Gong H."/>
            <person name="Fan X."/>
            <person name="Qiu F."/>
            <person name="Huang X."/>
            <person name="Feng Q."/>
            <person name="Zheng X."/>
            <person name="Yuan N."/>
            <person name="Li C."/>
            <person name="Zhang Z."/>
            <person name="Deng Y."/>
            <person name="Wang J."/>
            <person name="Pan G."/>
            <person name="Han B."/>
            <person name="Lai J."/>
            <person name="Wu Y."/>
        </authorList>
    </citation>
    <scope>NUCLEOTIDE SEQUENCE [GENOMIC DNA]</scope>
</reference>
<reference key="4">
    <citation type="journal article" date="2016" name="PLoS Genet.">
        <title>Maize opaque10 encodes a cereal-specific protein that is essential for the proper distribution of zeins in endosperm protein bodies.</title>
        <authorList>
            <person name="Yao D."/>
            <person name="Qi W."/>
            <person name="Li X."/>
            <person name="Yang Q."/>
            <person name="Yan S."/>
            <person name="Ling H."/>
            <person name="Wang G."/>
            <person name="Wang G."/>
            <person name="Song R."/>
        </authorList>
    </citation>
    <scope>INTERACTION WITH OP10</scope>
</reference>
<name>ZEG1_MAIZE</name>
<dbReference type="EMBL" id="BT062750">
    <property type="protein sequence ID" value="ACN27447.1"/>
    <property type="molecule type" value="mRNA"/>
</dbReference>
<dbReference type="EMBL" id="KU593569">
    <property type="protein sequence ID" value="ANA76493.1"/>
    <property type="molecule type" value="Genomic_DNA"/>
</dbReference>
<dbReference type="EMBL" id="KU593570">
    <property type="protein sequence ID" value="ANA76499.1"/>
    <property type="molecule type" value="Genomic_DNA"/>
</dbReference>
<dbReference type="RefSeq" id="NP_001105053.2">
    <property type="nucleotide sequence ID" value="NM_001111583.2"/>
</dbReference>
<dbReference type="STRING" id="4577.C0P381"/>
<dbReference type="PaxDb" id="4577-GRMZM2G138689_P01"/>
<dbReference type="EnsemblPlants" id="Zm00001eb313790_T001">
    <property type="protein sequence ID" value="Zm00001eb313790_P001"/>
    <property type="gene ID" value="Zm00001eb313790"/>
</dbReference>
<dbReference type="GeneID" id="541920"/>
<dbReference type="Gramene" id="Zm00001eb313790_T001">
    <property type="protein sequence ID" value="Zm00001eb313790_P001"/>
    <property type="gene ID" value="Zm00001eb313790"/>
</dbReference>
<dbReference type="KEGG" id="zma:541920"/>
<dbReference type="eggNOG" id="ENOG502R3UM">
    <property type="taxonomic scope" value="Eukaryota"/>
</dbReference>
<dbReference type="HOGENOM" id="CLU_907349_0_0_1"/>
<dbReference type="InParanoid" id="C0P381"/>
<dbReference type="OMA" id="HEQSHEQ"/>
<dbReference type="OrthoDB" id="692815at2759"/>
<dbReference type="Proteomes" id="UP000007305">
    <property type="component" value="Chromosome 7"/>
</dbReference>
<dbReference type="ExpressionAtlas" id="C0P381">
    <property type="expression patterns" value="baseline and differential"/>
</dbReference>
<dbReference type="GO" id="GO:0005886">
    <property type="term" value="C:plasma membrane"/>
    <property type="evidence" value="ECO:0007669"/>
    <property type="project" value="UniProtKB-SubCell"/>
</dbReference>
<dbReference type="GO" id="GO:0098552">
    <property type="term" value="C:side of membrane"/>
    <property type="evidence" value="ECO:0007669"/>
    <property type="project" value="UniProtKB-KW"/>
</dbReference>
<dbReference type="GO" id="GO:0045735">
    <property type="term" value="F:nutrient reservoir activity"/>
    <property type="evidence" value="ECO:0007669"/>
    <property type="project" value="UniProtKB-KW"/>
</dbReference>
<dbReference type="CDD" id="cd00261">
    <property type="entry name" value="AAI_SS"/>
    <property type="match status" value="1"/>
</dbReference>
<dbReference type="Gene3D" id="1.10.110.10">
    <property type="entry name" value="Plant lipid-transfer and hydrophobic proteins"/>
    <property type="match status" value="1"/>
</dbReference>
<dbReference type="InterPro" id="IPR036312">
    <property type="entry name" value="Bifun_inhib/LTP/seed_sf"/>
</dbReference>
<dbReference type="InterPro" id="IPR016140">
    <property type="entry name" value="Bifunc_inhib/LTP/seed_store"/>
</dbReference>
<dbReference type="InterPro" id="IPR001954">
    <property type="entry name" value="Glia_glutenin"/>
</dbReference>
<dbReference type="PANTHER" id="PTHR33454:SF14">
    <property type="entry name" value="50 KDA GAMMA-ZEIN"/>
    <property type="match status" value="1"/>
</dbReference>
<dbReference type="PANTHER" id="PTHR33454">
    <property type="entry name" value="PROLAMIN PPROL 14P"/>
    <property type="match status" value="1"/>
</dbReference>
<dbReference type="Pfam" id="PF13016">
    <property type="entry name" value="Gliadin"/>
    <property type="match status" value="1"/>
</dbReference>
<dbReference type="PRINTS" id="PR00208">
    <property type="entry name" value="GLIADGLUTEN"/>
</dbReference>
<dbReference type="SUPFAM" id="SSF47699">
    <property type="entry name" value="Bifunctional inhibitor/lipid-transfer protein/seed storage 2S albumin"/>
    <property type="match status" value="1"/>
</dbReference>
<sequence length="308" mass="36005">MKLVLVVLAFIALVSSVSCTQTGGCSCGQQQSHEQQHHPQQHHPQKQQHQPPPQHHQQQQHQQQQVHMQPQKHQQQQEVHVQQQQQQPQHQQQQQQQQHQQQHQCEGQQQHHQQSQGHVQQHEQSHEQHQGQSHEQQHQQQFQGHDKQQQPQQPQQYQQGQEKSQQQQCHCQEQQQTTRCSYNYYSSSSNLKNCHEFLRQQCSPLVMPFLQSRLIQPSSCQVLQQQCCHDLRQIEPQYIHQAIYNMVQSIIQEEQQQQPCELCGSQQATQSAVAILTAAQYLPSMCGLYHSYYQNNPCSSNDISGVCN</sequence>
<comment type="function">
    <text evidence="5">Zeins are major seed storage proteins.</text>
</comment>
<comment type="subunit">
    <text evidence="3">Interacts with OP10 (via N-terminus).</text>
</comment>
<comment type="subcellular location">
    <subcellularLocation>
        <location evidence="1">Cell membrane</location>
        <topology evidence="1">Lipid-anchor</topology>
        <topology evidence="1">GPI-anchor</topology>
    </subcellularLocation>
</comment>
<comment type="similarity">
    <text evidence="4">Belongs to the gliadin/glutenin family.</text>
</comment>
<organism>
    <name type="scientific">Zea mays</name>
    <name type="common">Maize</name>
    <dbReference type="NCBI Taxonomy" id="4577"/>
    <lineage>
        <taxon>Eukaryota</taxon>
        <taxon>Viridiplantae</taxon>
        <taxon>Streptophyta</taxon>
        <taxon>Embryophyta</taxon>
        <taxon>Tracheophyta</taxon>
        <taxon>Spermatophyta</taxon>
        <taxon>Magnoliopsida</taxon>
        <taxon>Liliopsida</taxon>
        <taxon>Poales</taxon>
        <taxon>Poaceae</taxon>
        <taxon>PACMAD clade</taxon>
        <taxon>Panicoideae</taxon>
        <taxon>Andropogonodae</taxon>
        <taxon>Andropogoneae</taxon>
        <taxon>Tripsacinae</taxon>
        <taxon>Zea</taxon>
    </lineage>
</organism>
<gene>
    <name evidence="6" type="ORF">GRMZM2G138689</name>
    <name type="ORF">Zm.96787</name>
</gene>